<reference key="1">
    <citation type="journal article" date="1987" name="Proc. Natl. Acad. Sci. U.S.A.">
        <title>Alternative splicing of human elastin mRNA indicated by sequence analysis of cloned genomic and complementary DNA.</title>
        <authorList>
            <person name="Indik Z."/>
            <person name="Yeh H."/>
            <person name="Ornstein-Goldstein N."/>
            <person name="Sheppard P."/>
            <person name="Anderson N."/>
            <person name="Rosenbloom J.C."/>
            <person name="Peltonen L."/>
            <person name="Rosenbloom J."/>
        </authorList>
    </citation>
    <scope>NUCLEOTIDE SEQUENCE [GENOMIC DNA] (ISOFORMS 2; 3; 4 AND 6)</scope>
    <scope>VARIANT SER-422</scope>
</reference>
<reference key="2">
    <citation type="journal article" date="1988" name="J. Invest. Dermatol.">
        <title>Cloning of full-length elastin cDNAs from a human skin fibroblast recombinant cDNA library: further elucidation of alternative splicing utilizing exon-specific oligonucleotides.</title>
        <authorList>
            <person name="Fazio M.J."/>
            <person name="Olsen D.R."/>
            <person name="Kauh E.A."/>
            <person name="Baldwin C.T."/>
            <person name="Indik Z."/>
            <person name="Ornstein-Goldstein N."/>
            <person name="Yeh H."/>
            <person name="Rosenbloom J."/>
            <person name="Uitto J."/>
        </authorList>
    </citation>
    <scope>NUCLEOTIDE SEQUENCE [MRNA] (ISOFORM 1)</scope>
    <scope>VARIANT SER-422</scope>
    <source>
        <tissue>Skin fibroblast</tissue>
    </source>
</reference>
<reference key="3">
    <citation type="journal article" date="2004" name="Nat. Genet.">
        <title>Complete sequencing and characterization of 21,243 full-length human cDNAs.</title>
        <authorList>
            <person name="Ota T."/>
            <person name="Suzuki Y."/>
            <person name="Nishikawa T."/>
            <person name="Otsuki T."/>
            <person name="Sugiyama T."/>
            <person name="Irie R."/>
            <person name="Wakamatsu A."/>
            <person name="Hayashi K."/>
            <person name="Sato H."/>
            <person name="Nagai K."/>
            <person name="Kimura K."/>
            <person name="Makita H."/>
            <person name="Sekine M."/>
            <person name="Obayashi M."/>
            <person name="Nishi T."/>
            <person name="Shibahara T."/>
            <person name="Tanaka T."/>
            <person name="Ishii S."/>
            <person name="Yamamoto J."/>
            <person name="Saito K."/>
            <person name="Kawai Y."/>
            <person name="Isono Y."/>
            <person name="Nakamura Y."/>
            <person name="Nagahari K."/>
            <person name="Murakami K."/>
            <person name="Yasuda T."/>
            <person name="Iwayanagi T."/>
            <person name="Wagatsuma M."/>
            <person name="Shiratori A."/>
            <person name="Sudo H."/>
            <person name="Hosoiri T."/>
            <person name="Kaku Y."/>
            <person name="Kodaira H."/>
            <person name="Kondo H."/>
            <person name="Sugawara M."/>
            <person name="Takahashi M."/>
            <person name="Kanda K."/>
            <person name="Yokoi T."/>
            <person name="Furuya T."/>
            <person name="Kikkawa E."/>
            <person name="Omura Y."/>
            <person name="Abe K."/>
            <person name="Kamihara K."/>
            <person name="Katsuta N."/>
            <person name="Sato K."/>
            <person name="Tanikawa M."/>
            <person name="Yamazaki M."/>
            <person name="Ninomiya K."/>
            <person name="Ishibashi T."/>
            <person name="Yamashita H."/>
            <person name="Murakawa K."/>
            <person name="Fujimori K."/>
            <person name="Tanai H."/>
            <person name="Kimata M."/>
            <person name="Watanabe M."/>
            <person name="Hiraoka S."/>
            <person name="Chiba Y."/>
            <person name="Ishida S."/>
            <person name="Ono Y."/>
            <person name="Takiguchi S."/>
            <person name="Watanabe S."/>
            <person name="Yosida M."/>
            <person name="Hotuta T."/>
            <person name="Kusano J."/>
            <person name="Kanehori K."/>
            <person name="Takahashi-Fujii A."/>
            <person name="Hara H."/>
            <person name="Tanase T.-O."/>
            <person name="Nomura Y."/>
            <person name="Togiya S."/>
            <person name="Komai F."/>
            <person name="Hara R."/>
            <person name="Takeuchi K."/>
            <person name="Arita M."/>
            <person name="Imose N."/>
            <person name="Musashino K."/>
            <person name="Yuuki H."/>
            <person name="Oshima A."/>
            <person name="Sasaki N."/>
            <person name="Aotsuka S."/>
            <person name="Yoshikawa Y."/>
            <person name="Matsunawa H."/>
            <person name="Ichihara T."/>
            <person name="Shiohata N."/>
            <person name="Sano S."/>
            <person name="Moriya S."/>
            <person name="Momiyama H."/>
            <person name="Satoh N."/>
            <person name="Takami S."/>
            <person name="Terashima Y."/>
            <person name="Suzuki O."/>
            <person name="Nakagawa S."/>
            <person name="Senoh A."/>
            <person name="Mizoguchi H."/>
            <person name="Goto Y."/>
            <person name="Shimizu F."/>
            <person name="Wakebe H."/>
            <person name="Hishigaki H."/>
            <person name="Watanabe T."/>
            <person name="Sugiyama A."/>
            <person name="Takemoto M."/>
            <person name="Kawakami B."/>
            <person name="Yamazaki M."/>
            <person name="Watanabe K."/>
            <person name="Kumagai A."/>
            <person name="Itakura S."/>
            <person name="Fukuzumi Y."/>
            <person name="Fujimori Y."/>
            <person name="Komiyama M."/>
            <person name="Tashiro H."/>
            <person name="Tanigami A."/>
            <person name="Fujiwara T."/>
            <person name="Ono T."/>
            <person name="Yamada K."/>
            <person name="Fujii Y."/>
            <person name="Ozaki K."/>
            <person name="Hirao M."/>
            <person name="Ohmori Y."/>
            <person name="Kawabata A."/>
            <person name="Hikiji T."/>
            <person name="Kobatake N."/>
            <person name="Inagaki H."/>
            <person name="Ikema Y."/>
            <person name="Okamoto S."/>
            <person name="Okitani R."/>
            <person name="Kawakami T."/>
            <person name="Noguchi S."/>
            <person name="Itoh T."/>
            <person name="Shigeta K."/>
            <person name="Senba T."/>
            <person name="Matsumura K."/>
            <person name="Nakajima Y."/>
            <person name="Mizuno T."/>
            <person name="Morinaga M."/>
            <person name="Sasaki M."/>
            <person name="Togashi T."/>
            <person name="Oyama M."/>
            <person name="Hata H."/>
            <person name="Watanabe M."/>
            <person name="Komatsu T."/>
            <person name="Mizushima-Sugano J."/>
            <person name="Satoh T."/>
            <person name="Shirai Y."/>
            <person name="Takahashi Y."/>
            <person name="Nakagawa K."/>
            <person name="Okumura K."/>
            <person name="Nagase T."/>
            <person name="Nomura N."/>
            <person name="Kikuchi H."/>
            <person name="Masuho Y."/>
            <person name="Yamashita R."/>
            <person name="Nakai K."/>
            <person name="Yada T."/>
            <person name="Nakamura Y."/>
            <person name="Ohara O."/>
            <person name="Isogai T."/>
            <person name="Sugano S."/>
        </authorList>
    </citation>
    <scope>NUCLEOTIDE SEQUENCE [LARGE SCALE MRNA] (ISOFORMS 11 AND 12)</scope>
    <scope>VARIANT SER-422</scope>
</reference>
<reference key="4">
    <citation type="journal article" date="2007" name="BMC Genomics">
        <title>The full-ORF clone resource of the German cDNA consortium.</title>
        <authorList>
            <person name="Bechtel S."/>
            <person name="Rosenfelder H."/>
            <person name="Duda A."/>
            <person name="Schmidt C.P."/>
            <person name="Ernst U."/>
            <person name="Wellenreuther R."/>
            <person name="Mehrle A."/>
            <person name="Schuster C."/>
            <person name="Bahr A."/>
            <person name="Bloecker H."/>
            <person name="Heubner D."/>
            <person name="Hoerlein A."/>
            <person name="Michel G."/>
            <person name="Wedler H."/>
            <person name="Koehrer K."/>
            <person name="Ottenwaelder B."/>
            <person name="Poustka A."/>
            <person name="Wiemann S."/>
            <person name="Schupp I."/>
        </authorList>
    </citation>
    <scope>NUCLEOTIDE SEQUENCE [LARGE SCALE MRNA] (ISOFORMS 5 AND 7)</scope>
    <source>
        <tissue>Fetal kidney</tissue>
    </source>
</reference>
<reference key="5">
    <citation type="submission" date="2006-07" db="EMBL/GenBank/DDBJ databases">
        <authorList>
            <person name="Suzuki Y."/>
            <person name="Sugano S."/>
            <person name="Totoki Y."/>
            <person name="Toyoda A."/>
            <person name="Takeda T."/>
            <person name="Sakaki Y."/>
            <person name="Tanaka A."/>
            <person name="Yokoyama S."/>
        </authorList>
    </citation>
    <scope>NUCLEOTIDE SEQUENCE [LARGE SCALE MRNA] (ISOFORM 13)</scope>
    <source>
        <tissue>Gastric mucosa</tissue>
    </source>
</reference>
<reference key="6">
    <citation type="journal article" date="2003" name="Nature">
        <title>The DNA sequence of human chromosome 7.</title>
        <authorList>
            <person name="Hillier L.W."/>
            <person name="Fulton R.S."/>
            <person name="Fulton L.A."/>
            <person name="Graves T.A."/>
            <person name="Pepin K.H."/>
            <person name="Wagner-McPherson C."/>
            <person name="Layman D."/>
            <person name="Maas J."/>
            <person name="Jaeger S."/>
            <person name="Walker R."/>
            <person name="Wylie K."/>
            <person name="Sekhon M."/>
            <person name="Becker M.C."/>
            <person name="O'Laughlin M.D."/>
            <person name="Schaller M.E."/>
            <person name="Fewell G.A."/>
            <person name="Delehaunty K.D."/>
            <person name="Miner T.L."/>
            <person name="Nash W.E."/>
            <person name="Cordes M."/>
            <person name="Du H."/>
            <person name="Sun H."/>
            <person name="Edwards J."/>
            <person name="Bradshaw-Cordum H."/>
            <person name="Ali J."/>
            <person name="Andrews S."/>
            <person name="Isak A."/>
            <person name="Vanbrunt A."/>
            <person name="Nguyen C."/>
            <person name="Du F."/>
            <person name="Lamar B."/>
            <person name="Courtney L."/>
            <person name="Kalicki J."/>
            <person name="Ozersky P."/>
            <person name="Bielicki L."/>
            <person name="Scott K."/>
            <person name="Holmes A."/>
            <person name="Harkins R."/>
            <person name="Harris A."/>
            <person name="Strong C.M."/>
            <person name="Hou S."/>
            <person name="Tomlinson C."/>
            <person name="Dauphin-Kohlberg S."/>
            <person name="Kozlowicz-Reilly A."/>
            <person name="Leonard S."/>
            <person name="Rohlfing T."/>
            <person name="Rock S.M."/>
            <person name="Tin-Wollam A.-M."/>
            <person name="Abbott A."/>
            <person name="Minx P."/>
            <person name="Maupin R."/>
            <person name="Strowmatt C."/>
            <person name="Latreille P."/>
            <person name="Miller N."/>
            <person name="Johnson D."/>
            <person name="Murray J."/>
            <person name="Woessner J.P."/>
            <person name="Wendl M.C."/>
            <person name="Yang S.-P."/>
            <person name="Schultz B.R."/>
            <person name="Wallis J.W."/>
            <person name="Spieth J."/>
            <person name="Bieri T.A."/>
            <person name="Nelson J.O."/>
            <person name="Berkowicz N."/>
            <person name="Wohldmann P.E."/>
            <person name="Cook L.L."/>
            <person name="Hickenbotham M.T."/>
            <person name="Eldred J."/>
            <person name="Williams D."/>
            <person name="Bedell J.A."/>
            <person name="Mardis E.R."/>
            <person name="Clifton S.W."/>
            <person name="Chissoe S.L."/>
            <person name="Marra M.A."/>
            <person name="Raymond C."/>
            <person name="Haugen E."/>
            <person name="Gillett W."/>
            <person name="Zhou Y."/>
            <person name="James R."/>
            <person name="Phelps K."/>
            <person name="Iadanoto S."/>
            <person name="Bubb K."/>
            <person name="Simms E."/>
            <person name="Levy R."/>
            <person name="Clendenning J."/>
            <person name="Kaul R."/>
            <person name="Kent W.J."/>
            <person name="Furey T.S."/>
            <person name="Baertsch R.A."/>
            <person name="Brent M.R."/>
            <person name="Keibler E."/>
            <person name="Flicek P."/>
            <person name="Bork P."/>
            <person name="Suyama M."/>
            <person name="Bailey J.A."/>
            <person name="Portnoy M.E."/>
            <person name="Torrents D."/>
            <person name="Chinwalla A.T."/>
            <person name="Gish W.R."/>
            <person name="Eddy S.R."/>
            <person name="McPherson J.D."/>
            <person name="Olson M.V."/>
            <person name="Eichler E.E."/>
            <person name="Green E.D."/>
            <person name="Waterston R.H."/>
            <person name="Wilson R.K."/>
        </authorList>
    </citation>
    <scope>NUCLEOTIDE SEQUENCE [LARGE SCALE GENOMIC DNA]</scope>
</reference>
<reference key="7">
    <citation type="submission" date="2005-09" db="EMBL/GenBank/DDBJ databases">
        <authorList>
            <person name="Mural R.J."/>
            <person name="Istrail S."/>
            <person name="Sutton G.G."/>
            <person name="Florea L."/>
            <person name="Halpern A.L."/>
            <person name="Mobarry C.M."/>
            <person name="Lippert R."/>
            <person name="Walenz B."/>
            <person name="Shatkay H."/>
            <person name="Dew I."/>
            <person name="Miller J.R."/>
            <person name="Flanigan M.J."/>
            <person name="Edwards N.J."/>
            <person name="Bolanos R."/>
            <person name="Fasulo D."/>
            <person name="Halldorsson B.V."/>
            <person name="Hannenhalli S."/>
            <person name="Turner R."/>
            <person name="Yooseph S."/>
            <person name="Lu F."/>
            <person name="Nusskern D.R."/>
            <person name="Shue B.C."/>
            <person name="Zheng X.H."/>
            <person name="Zhong F."/>
            <person name="Delcher A.L."/>
            <person name="Huson D.H."/>
            <person name="Kravitz S.A."/>
            <person name="Mouchard L."/>
            <person name="Reinert K."/>
            <person name="Remington K.A."/>
            <person name="Clark A.G."/>
            <person name="Waterman M.S."/>
            <person name="Eichler E.E."/>
            <person name="Adams M.D."/>
            <person name="Hunkapiller M.W."/>
            <person name="Myers E.W."/>
            <person name="Venter J.C."/>
        </authorList>
    </citation>
    <scope>NUCLEOTIDE SEQUENCE [LARGE SCALE GENOMIC DNA]</scope>
</reference>
<reference key="8">
    <citation type="journal article" date="2004" name="Genome Res.">
        <title>The status, quality, and expansion of the NIH full-length cDNA project: the Mammalian Gene Collection (MGC).</title>
        <authorList>
            <consortium name="The MGC Project Team"/>
        </authorList>
    </citation>
    <scope>NUCLEOTIDE SEQUENCE [LARGE SCALE MRNA] (ISOFORM 8)</scope>
    <scope>VARIANTS SER-422 AND ARG-610</scope>
    <source>
        <tissue>Eye</tissue>
    </source>
</reference>
<reference key="9">
    <citation type="journal article" date="1989" name="J. Biol. Chem.">
        <title>Characterization of the complete human elastin gene. Delineation of unusual features in the 5'-flanking region.</title>
        <authorList>
            <person name="Bashir M.M."/>
            <person name="Indik Z."/>
            <person name="Yeh H."/>
            <person name="Ornstein-Goldstein N."/>
            <person name="Rosenbloom J.C."/>
            <person name="Abrams W."/>
            <person name="Fazio M."/>
            <person name="Uitto J."/>
            <person name="Rosenbloom J."/>
        </authorList>
    </citation>
    <scope>NUCLEOTIDE SEQUENCE [MRNA] OF 1-27</scope>
</reference>
<reference key="10">
    <citation type="submission" date="1989-06" db="EMBL/GenBank/DDBJ databases">
        <authorList>
            <person name="Bressan G.M."/>
        </authorList>
    </citation>
    <scope>NUCLEOTIDE SEQUENCE OF 1-27</scope>
</reference>
<reference key="11">
    <citation type="submission" date="1991-10" db="EMBL/GenBank/DDBJ databases">
        <authorList>
            <person name="Bressan G.M."/>
        </authorList>
    </citation>
    <scope>SEQUENCE REVISION</scope>
</reference>
<reference key="12">
    <citation type="journal article" date="1997" name="Hum. Mol. Genet.">
        <title>Elastin point mutations cause an obstructive vascular disease, supravalvular aortic stenosis.</title>
        <authorList>
            <person name="Li D.Y."/>
            <person name="Toland A.E."/>
            <person name="Boak B.B."/>
            <person name="Atkinson D.L."/>
            <person name="Ensing G.J."/>
            <person name="Morris C.A."/>
            <person name="Keating M.T."/>
        </authorList>
    </citation>
    <scope>NUCLEOTIDE SEQUENCE [GENOMIC DNA] OF 29-657 (ISOFORMS 9 AND 10)</scope>
    <scope>VARIANTS SER-422 AND ARG-610</scope>
</reference>
<reference key="13">
    <citation type="journal article" date="1988" name="Lab. Invest.">
        <title>Isolation and characterization of human elastin cDNAs, and age-associated variation in elastin gene expression in cultured skin fibroblasts.</title>
        <authorList>
            <person name="Fazio M.J."/>
            <person name="Olsen D.R."/>
            <person name="Kuivaniemi H."/>
            <person name="Chu M.L."/>
            <person name="Davidson J.M."/>
            <person name="Rosenbloom J."/>
            <person name="Uitto J."/>
        </authorList>
    </citation>
    <scope>NUCLEOTIDE SEQUENCE [MRNA] OF 164-724 (ISOFORM 2)</scope>
    <scope>VARIANT SER-422</scope>
    <source>
        <tissue>Placenta</tissue>
    </source>
</reference>
<reference key="14">
    <citation type="journal article" date="1996" name="Genomics">
        <title>Identification of genes from a 500-kb region at 7q11.23 that is commonly deleted in Williams syndrome patients.</title>
        <authorList>
            <person name="Osborne L.R."/>
            <person name="Martindale D.W."/>
            <person name="Scherer S.W."/>
            <person name="Shi X.-M."/>
            <person name="Huizenga J."/>
            <person name="Heng H.H.Q."/>
            <person name="Costa T."/>
            <person name="Pober B."/>
            <person name="Lew L."/>
            <person name="Brinkman J."/>
            <person name="Rommens J."/>
            <person name="Koop B.F."/>
            <person name="Tsui L.-C."/>
        </authorList>
    </citation>
    <scope>NUCLEOTIDE SEQUENCE [GENOMIC DNA] OF 496-786 (ISOFORM 1/10)</scope>
    <scope>TISSUE SPECIFICITY</scope>
</reference>
<reference key="15">
    <citation type="journal article" date="1996" name="Cell">
        <title>LIM-kinase1 hemizygosity implicated in impaired visuospatial constructive cognition.</title>
        <authorList>
            <person name="Frangiskakis J.M."/>
            <person name="Ewart A.K."/>
            <person name="Morris C.A."/>
            <person name="Mervis C.B."/>
            <person name="Bertrand J."/>
            <person name="Robinson B.F."/>
            <person name="Klein B.P."/>
            <person name="Ensing G.J."/>
            <person name="Everett L.A."/>
            <person name="Green E.D."/>
            <person name="Proeschel C."/>
            <person name="Gutowski N.J."/>
            <person name="Noble M."/>
            <person name="Atkinson D.L."/>
            <person name="Odelberg S.J."/>
            <person name="Keating M.T."/>
        </authorList>
    </citation>
    <scope>NUCLEOTIDE SEQUENCE [GENOMIC DNA] OF 659-786</scope>
    <scope>VARIANT SER-422</scope>
    <source>
        <tissue>Hippocampus</tissue>
        <tissue>Placenta</tissue>
    </source>
</reference>
<reference key="16">
    <citation type="journal article" date="1999" name="J. Biol. Chem.">
        <title>Cutis laxa arising from frameshift mutations in exon 30 of the elastin gene (ELN).</title>
        <authorList>
            <person name="Zhang M.-C."/>
            <person name="He L."/>
            <person name="Giro M."/>
            <person name="Yong S.L."/>
            <person name="Tiller G.E."/>
            <person name="Davidson J.M."/>
        </authorList>
    </citation>
    <scope>INVOLVEMENT IN ADCL1</scope>
</reference>
<reference key="17">
    <citation type="journal article" date="2000" name="Hum. Genet.">
        <title>Isolated supravalvular aortic stenosis: functional haploinsufficiency of the elastin gene as a result of nonsense-mediated decay.</title>
        <authorList>
            <person name="Urban Z."/>
            <person name="Michels V.V."/>
            <person name="Thibodeau S.N."/>
            <person name="Davis E.C."/>
            <person name="Bonnefont J.-P."/>
            <person name="Munnich A."/>
            <person name="Eyskens B."/>
            <person name="Gewillig M."/>
            <person name="Devriendt K."/>
            <person name="Boyd C.D."/>
        </authorList>
    </citation>
    <scope>INVOLVEMENT IN SVAS</scope>
</reference>
<reference key="18">
    <citation type="journal article" date="2005" name="Biochem. J.">
        <title>Fibulin-5 interacts with fibrillin-1 molecules and microfibrils.</title>
        <authorList>
            <person name="Freeman L.J."/>
            <person name="Lomas A."/>
            <person name="Hodson N."/>
            <person name="Sherratt M.J."/>
            <person name="Mellody K.T."/>
            <person name="Weiss A.S."/>
            <person name="Shuttleworth A."/>
            <person name="Kielty C.M."/>
        </authorList>
    </citation>
    <scope>INTERACTION WITH FBN1 AND FBLN5</scope>
</reference>
<reference key="19">
    <citation type="journal article" date="2005" name="J. Chromatogr. A">
        <title>Mass spectrometric characterization of human skin elastin peptides produced by proteolytic digestion with pepsin and thermitase.</title>
        <authorList>
            <person name="Schmelzer C.E.H."/>
            <person name="Getie M."/>
            <person name="Neubert R.H.H."/>
        </authorList>
    </citation>
    <scope>HYDROXYLATION AT PRO-65; PRO-67; PRO-88; PRO-116; PRO-156; PRO-177; PRO-190; PRO-286; PRO-290; PRO-415; PRO-427; PRO-465; PRO-481; PRO-522; PRO-580; PRO-607; PRO-646; PRO-677; PRO-769 AND PRO-772</scope>
    <scope>IDENTIFICATION BY MASS SPECTROMETRY</scope>
</reference>
<reference key="20">
    <citation type="journal article" date="2005" name="Proteins">
        <title>Characterization of peptides resulting from digestion of human skin elastin with elastase.</title>
        <authorList>
            <person name="Getie M."/>
            <person name="Schmelzer C.E.H."/>
            <person name="Neubert R.H.H."/>
        </authorList>
    </citation>
    <scope>HYDROXYLATION AT PRO-34; PRO-167; PRO-170; PRO-190; PRO-283; PRO-286; PRO-327; PRO-342; PRO-347; PRO-352; PRO-355; PRO-360; PRO-421; PRO-427; PRO-550; PRO-580; PRO-589; PRO-598 AND PRO-677</scope>
    <scope>IDENTIFICATION BY MASS SPECTROMETRY</scope>
</reference>
<reference key="21">
    <citation type="journal article" date="2006" name="Hum. Mol. Genet.">
        <title>Fibulin-5 mutations: mechanisms of impaired elastic fiber formation in recessive cutis laxa.</title>
        <authorList>
            <person name="Hu Q."/>
            <person name="Loeys B.L."/>
            <person name="Coucke P.J."/>
            <person name="De Paepe A."/>
            <person name="Mecham R.P."/>
            <person name="Choi J."/>
            <person name="Davis E.C."/>
            <person name="Urban Z."/>
        </authorList>
    </citation>
    <scope>INTERACTION WITH FBLN5</scope>
    <scope>SUBCELLULAR LOCATION</scope>
</reference>
<reference key="22">
    <citation type="journal article" date="2006" name="Mol. Cell. Biol.">
        <title>Targeted disruption of fibulin-4 abolishes elastogenesis and causes perinatal lethality in mice.</title>
        <authorList>
            <person name="McLaughlin P.J."/>
            <person name="Chen Q."/>
            <person name="Horiguchi M."/>
            <person name="Starcher B.C."/>
            <person name="Stanton J.B."/>
            <person name="Broekelmann T.J."/>
            <person name="Marmorstein A.D."/>
            <person name="McKay B."/>
            <person name="Mecham R."/>
            <person name="Nakamura T."/>
            <person name="Marmorstein L.Y."/>
        </authorList>
    </citation>
    <scope>INTERACTION WITH EFEMP2</scope>
</reference>
<reference key="23">
    <citation type="journal article" date="2009" name="J. Biol. Chem.">
        <title>Differential regulation of elastic fiber formation by fibulin-4 and -5.</title>
        <authorList>
            <person name="Choudhury R."/>
            <person name="McGovern A."/>
            <person name="Ridley C."/>
            <person name="Cain S.A."/>
            <person name="Baldwin A."/>
            <person name="Wang M.C."/>
            <person name="Guo C."/>
            <person name="Mironov A. Jr."/>
            <person name="Drymoussi Z."/>
            <person name="Trump D."/>
            <person name="Shuttleworth A."/>
            <person name="Baldock C."/>
            <person name="Kielty C.M."/>
        </authorList>
    </citation>
    <scope>INTERACTION WITH EFEMP2</scope>
</reference>
<reference key="24">
    <citation type="journal article" date="2007" name="J. Biol. Chem.">
        <title>Fibrillin-1 interactions with fibulins depend on the first hybrid domain and provide an adaptor function to tropoelastin.</title>
        <authorList>
            <person name="El-Hallous E."/>
            <person name="Sasaki T."/>
            <person name="Hubmacher D."/>
            <person name="Getie M."/>
            <person name="Tiedemann K."/>
            <person name="Brinckmann J."/>
            <person name="Baetge B."/>
            <person name="Davis E.C."/>
            <person name="Reinhardt D.P."/>
        </authorList>
    </citation>
    <scope>INTERACTION WITH FBN1; FBLN2 AND FBLN5</scope>
</reference>
<reference key="25">
    <citation type="journal article" date="2009" name="J. Invest. Dermatol.">
        <title>An autosomal-recessive form of cutis laxa is due to homozygous elastin mutations, and the phenotype may be modified by a heterozygous fibulin 5 polymorphism.</title>
        <authorList>
            <person name="Megarbane H."/>
            <person name="Florence J."/>
            <person name="Sass J.O."/>
            <person name="Schwonbeck S."/>
            <person name="Foglio M."/>
            <person name="de Cid R."/>
            <person name="Cure S."/>
            <person name="Saker S."/>
            <person name="Megarbane A."/>
            <person name="Fischer J."/>
        </authorList>
    </citation>
    <scope>VARIANT SER-211</scope>
</reference>
<gene>
    <name type="primary">ELN</name>
</gene>
<protein>
    <recommendedName>
        <fullName>Elastin</fullName>
    </recommendedName>
    <alternativeName>
        <fullName>Tropoelastin</fullName>
    </alternativeName>
</protein>
<keyword id="KW-0025">Alternative splicing</keyword>
<keyword id="KW-1015">Disulfide bond</keyword>
<keyword id="KW-0272">Extracellular matrix</keyword>
<keyword id="KW-0379">Hydroxylation</keyword>
<keyword id="KW-1267">Proteomics identification</keyword>
<keyword id="KW-1185">Reference proteome</keyword>
<keyword id="KW-0677">Repeat</keyword>
<keyword id="KW-0964">Secreted</keyword>
<keyword id="KW-0732">Signal</keyword>
<keyword id="KW-0856">Williams-Beuren syndrome</keyword>
<accession>P15502</accession>
<accession>B3KTS6</accession>
<accession>O15336</accession>
<accession>O15337</accession>
<accession>Q14233</accession>
<accession>Q14234</accession>
<accession>Q14235</accession>
<accession>Q14238</accession>
<accession>Q6P0L4</accession>
<accession>Q6ZWJ6</accession>
<accession>Q75MU5</accession>
<accession>Q7Z316</accession>
<accession>Q7Z3F5</accession>
<accession>Q9UMF5</accession>
<dbReference type="EMBL" id="M17282">
    <property type="protein sequence ID" value="AAC98393.1"/>
    <property type="molecule type" value="Genomic_DNA"/>
</dbReference>
<dbReference type="EMBL" id="M16983">
    <property type="protein sequence ID" value="AAC98393.1"/>
    <property type="status" value="JOINED"/>
    <property type="molecule type" value="Genomic_DNA"/>
</dbReference>
<dbReference type="EMBL" id="M17265">
    <property type="protein sequence ID" value="AAC98393.1"/>
    <property type="status" value="JOINED"/>
    <property type="molecule type" value="Genomic_DNA"/>
</dbReference>
<dbReference type="EMBL" id="M17266">
    <property type="protein sequence ID" value="AAC98393.1"/>
    <property type="status" value="JOINED"/>
    <property type="molecule type" value="Genomic_DNA"/>
</dbReference>
<dbReference type="EMBL" id="M17267">
    <property type="protein sequence ID" value="AAC98393.1"/>
    <property type="status" value="JOINED"/>
    <property type="molecule type" value="Genomic_DNA"/>
</dbReference>
<dbReference type="EMBL" id="M17268">
    <property type="protein sequence ID" value="AAC98393.1"/>
    <property type="status" value="JOINED"/>
    <property type="molecule type" value="Genomic_DNA"/>
</dbReference>
<dbReference type="EMBL" id="M17271">
    <property type="protein sequence ID" value="AAC98393.1"/>
    <property type="status" value="JOINED"/>
    <property type="molecule type" value="Genomic_DNA"/>
</dbReference>
<dbReference type="EMBL" id="M17272">
    <property type="protein sequence ID" value="AAC98393.1"/>
    <property type="status" value="JOINED"/>
    <property type="molecule type" value="Genomic_DNA"/>
</dbReference>
<dbReference type="EMBL" id="M17273">
    <property type="protein sequence ID" value="AAC98393.1"/>
    <property type="status" value="JOINED"/>
    <property type="molecule type" value="Genomic_DNA"/>
</dbReference>
<dbReference type="EMBL" id="M17275">
    <property type="protein sequence ID" value="AAC98393.1"/>
    <property type="status" value="JOINED"/>
    <property type="molecule type" value="Genomic_DNA"/>
</dbReference>
<dbReference type="EMBL" id="M17276">
    <property type="protein sequence ID" value="AAC98393.1"/>
    <property type="status" value="JOINED"/>
    <property type="molecule type" value="Genomic_DNA"/>
</dbReference>
<dbReference type="EMBL" id="M17277">
    <property type="protein sequence ID" value="AAC98393.1"/>
    <property type="status" value="JOINED"/>
    <property type="molecule type" value="Genomic_DNA"/>
</dbReference>
<dbReference type="EMBL" id="M17278">
    <property type="protein sequence ID" value="AAC98393.1"/>
    <property type="status" value="JOINED"/>
    <property type="molecule type" value="Genomic_DNA"/>
</dbReference>
<dbReference type="EMBL" id="M17279">
    <property type="protein sequence ID" value="AAC98393.1"/>
    <property type="status" value="JOINED"/>
    <property type="molecule type" value="Genomic_DNA"/>
</dbReference>
<dbReference type="EMBL" id="M17281">
    <property type="protein sequence ID" value="AAC98393.1"/>
    <property type="status" value="JOINED"/>
    <property type="molecule type" value="Genomic_DNA"/>
</dbReference>
<dbReference type="EMBL" id="M17282">
    <property type="protein sequence ID" value="AAC98394.1"/>
    <property type="molecule type" value="Genomic_DNA"/>
</dbReference>
<dbReference type="EMBL" id="M16983">
    <property type="protein sequence ID" value="AAC98394.1"/>
    <property type="status" value="JOINED"/>
    <property type="molecule type" value="Genomic_DNA"/>
</dbReference>
<dbReference type="EMBL" id="M17265">
    <property type="protein sequence ID" value="AAC98394.1"/>
    <property type="status" value="JOINED"/>
    <property type="molecule type" value="Genomic_DNA"/>
</dbReference>
<dbReference type="EMBL" id="M17266">
    <property type="protein sequence ID" value="AAC98394.1"/>
    <property type="status" value="JOINED"/>
    <property type="molecule type" value="Genomic_DNA"/>
</dbReference>
<dbReference type="EMBL" id="M17267">
    <property type="protein sequence ID" value="AAC98394.1"/>
    <property type="status" value="JOINED"/>
    <property type="molecule type" value="Genomic_DNA"/>
</dbReference>
<dbReference type="EMBL" id="M17268">
    <property type="protein sequence ID" value="AAC98394.1"/>
    <property type="status" value="JOINED"/>
    <property type="molecule type" value="Genomic_DNA"/>
</dbReference>
<dbReference type="EMBL" id="M17270">
    <property type="protein sequence ID" value="AAC98394.1"/>
    <property type="status" value="JOINED"/>
    <property type="molecule type" value="Genomic_DNA"/>
</dbReference>
<dbReference type="EMBL" id="M17271">
    <property type="protein sequence ID" value="AAC98394.1"/>
    <property type="status" value="JOINED"/>
    <property type="molecule type" value="Genomic_DNA"/>
</dbReference>
<dbReference type="EMBL" id="M17272">
    <property type="protein sequence ID" value="AAC98394.1"/>
    <property type="status" value="JOINED"/>
    <property type="molecule type" value="Genomic_DNA"/>
</dbReference>
<dbReference type="EMBL" id="M17273">
    <property type="protein sequence ID" value="AAC98394.1"/>
    <property type="status" value="JOINED"/>
    <property type="molecule type" value="Genomic_DNA"/>
</dbReference>
<dbReference type="EMBL" id="M17275">
    <property type="protein sequence ID" value="AAC98394.1"/>
    <property type="status" value="JOINED"/>
    <property type="molecule type" value="Genomic_DNA"/>
</dbReference>
<dbReference type="EMBL" id="M17276">
    <property type="protein sequence ID" value="AAC98394.1"/>
    <property type="status" value="JOINED"/>
    <property type="molecule type" value="Genomic_DNA"/>
</dbReference>
<dbReference type="EMBL" id="M17277">
    <property type="protein sequence ID" value="AAC98394.1"/>
    <property type="status" value="JOINED"/>
    <property type="molecule type" value="Genomic_DNA"/>
</dbReference>
<dbReference type="EMBL" id="M17278">
    <property type="protein sequence ID" value="AAC98394.1"/>
    <property type="status" value="JOINED"/>
    <property type="molecule type" value="Genomic_DNA"/>
</dbReference>
<dbReference type="EMBL" id="M17279">
    <property type="protein sequence ID" value="AAC98394.1"/>
    <property type="status" value="JOINED"/>
    <property type="molecule type" value="Genomic_DNA"/>
</dbReference>
<dbReference type="EMBL" id="M17280">
    <property type="protein sequence ID" value="AAC98394.1"/>
    <property type="status" value="JOINED"/>
    <property type="molecule type" value="Genomic_DNA"/>
</dbReference>
<dbReference type="EMBL" id="M17281">
    <property type="protein sequence ID" value="AAC98394.1"/>
    <property type="status" value="JOINED"/>
    <property type="molecule type" value="Genomic_DNA"/>
</dbReference>
<dbReference type="EMBL" id="M17282">
    <property type="protein sequence ID" value="AAC98395.1"/>
    <property type="molecule type" value="Genomic_DNA"/>
</dbReference>
<dbReference type="EMBL" id="M16983">
    <property type="protein sequence ID" value="AAC98395.1"/>
    <property type="status" value="JOINED"/>
    <property type="molecule type" value="Genomic_DNA"/>
</dbReference>
<dbReference type="EMBL" id="M17265">
    <property type="protein sequence ID" value="AAC98395.1"/>
    <property type="status" value="JOINED"/>
    <property type="molecule type" value="Genomic_DNA"/>
</dbReference>
<dbReference type="EMBL" id="M17266">
    <property type="protein sequence ID" value="AAC98395.1"/>
    <property type="status" value="JOINED"/>
    <property type="molecule type" value="Genomic_DNA"/>
</dbReference>
<dbReference type="EMBL" id="M17267">
    <property type="protein sequence ID" value="AAC98395.1"/>
    <property type="status" value="JOINED"/>
    <property type="molecule type" value="Genomic_DNA"/>
</dbReference>
<dbReference type="EMBL" id="M17268">
    <property type="protein sequence ID" value="AAC98395.1"/>
    <property type="status" value="JOINED"/>
    <property type="molecule type" value="Genomic_DNA"/>
</dbReference>
<dbReference type="EMBL" id="M17270">
    <property type="protein sequence ID" value="AAC98395.1"/>
    <property type="status" value="JOINED"/>
    <property type="molecule type" value="Genomic_DNA"/>
</dbReference>
<dbReference type="EMBL" id="M17271">
    <property type="protein sequence ID" value="AAC98395.1"/>
    <property type="status" value="JOINED"/>
    <property type="molecule type" value="Genomic_DNA"/>
</dbReference>
<dbReference type="EMBL" id="M17272">
    <property type="protein sequence ID" value="AAC98395.1"/>
    <property type="status" value="JOINED"/>
    <property type="molecule type" value="Genomic_DNA"/>
</dbReference>
<dbReference type="EMBL" id="M17273">
    <property type="protein sequence ID" value="AAC98395.1"/>
    <property type="status" value="JOINED"/>
    <property type="molecule type" value="Genomic_DNA"/>
</dbReference>
<dbReference type="EMBL" id="M17274">
    <property type="protein sequence ID" value="AAC98395.1"/>
    <property type="status" value="JOINED"/>
    <property type="molecule type" value="Genomic_DNA"/>
</dbReference>
<dbReference type="EMBL" id="M17275">
    <property type="protein sequence ID" value="AAC98395.1"/>
    <property type="status" value="JOINED"/>
    <property type="molecule type" value="Genomic_DNA"/>
</dbReference>
<dbReference type="EMBL" id="M17276">
    <property type="protein sequence ID" value="AAC98395.1"/>
    <property type="status" value="JOINED"/>
    <property type="molecule type" value="Genomic_DNA"/>
</dbReference>
<dbReference type="EMBL" id="M17277">
    <property type="protein sequence ID" value="AAC98395.1"/>
    <property type="status" value="JOINED"/>
    <property type="molecule type" value="Genomic_DNA"/>
</dbReference>
<dbReference type="EMBL" id="M17278">
    <property type="protein sequence ID" value="AAC98395.1"/>
    <property type="status" value="JOINED"/>
    <property type="molecule type" value="Genomic_DNA"/>
</dbReference>
<dbReference type="EMBL" id="M17279">
    <property type="protein sequence ID" value="AAC98395.1"/>
    <property type="status" value="JOINED"/>
    <property type="molecule type" value="Genomic_DNA"/>
</dbReference>
<dbReference type="EMBL" id="M17280">
    <property type="protein sequence ID" value="AAC98395.1"/>
    <property type="status" value="JOINED"/>
    <property type="molecule type" value="Genomic_DNA"/>
</dbReference>
<dbReference type="EMBL" id="M17281">
    <property type="protein sequence ID" value="AAC98395.1"/>
    <property type="status" value="JOINED"/>
    <property type="molecule type" value="Genomic_DNA"/>
</dbReference>
<dbReference type="EMBL" id="M36860">
    <property type="protein sequence ID" value="AAA52382.1"/>
    <property type="molecule type" value="mRNA"/>
</dbReference>
<dbReference type="EMBL" id="AK095990">
    <property type="protein sequence ID" value="BAG53188.1"/>
    <property type="molecule type" value="mRNA"/>
</dbReference>
<dbReference type="EMBL" id="AK122731">
    <property type="protein sequence ID" value="BAC85506.1"/>
    <property type="molecule type" value="mRNA"/>
</dbReference>
<dbReference type="EMBL" id="BX537939">
    <property type="protein sequence ID" value="CAD97910.1"/>
    <property type="molecule type" value="mRNA"/>
</dbReference>
<dbReference type="EMBL" id="BX538199">
    <property type="protein sequence ID" value="CAD98065.1"/>
    <property type="status" value="ALT_INIT"/>
    <property type="molecule type" value="mRNA"/>
</dbReference>
<dbReference type="EMBL" id="AK225659">
    <property type="status" value="NOT_ANNOTATED_CDS"/>
    <property type="molecule type" value="mRNA"/>
</dbReference>
<dbReference type="EMBL" id="AC005056">
    <property type="protein sequence ID" value="AAS07435.1"/>
    <property type="molecule type" value="Genomic_DNA"/>
</dbReference>
<dbReference type="EMBL" id="CH471200">
    <property type="protein sequence ID" value="EAW69627.1"/>
    <property type="molecule type" value="Genomic_DNA"/>
</dbReference>
<dbReference type="EMBL" id="BC065566">
    <property type="protein sequence ID" value="AAH65566.1"/>
    <property type="molecule type" value="mRNA"/>
</dbReference>
<dbReference type="EMBL" id="X15603">
    <property type="protein sequence ID" value="CAA33627.1"/>
    <property type="molecule type" value="Genomic_DNA"/>
</dbReference>
<dbReference type="EMBL" id="U93037">
    <property type="protein sequence ID" value="AAB65620.1"/>
    <property type="molecule type" value="Genomic_DNA"/>
</dbReference>
<dbReference type="EMBL" id="U93034">
    <property type="protein sequence ID" value="AAB65620.1"/>
    <property type="status" value="JOINED"/>
    <property type="molecule type" value="Genomic_DNA"/>
</dbReference>
<dbReference type="EMBL" id="U93035">
    <property type="protein sequence ID" value="AAB65620.1"/>
    <property type="status" value="JOINED"/>
    <property type="molecule type" value="Genomic_DNA"/>
</dbReference>
<dbReference type="EMBL" id="U93036">
    <property type="protein sequence ID" value="AAB65620.1"/>
    <property type="status" value="JOINED"/>
    <property type="molecule type" value="Genomic_DNA"/>
</dbReference>
<dbReference type="EMBL" id="U93037">
    <property type="protein sequence ID" value="AAB65621.1"/>
    <property type="molecule type" value="Genomic_DNA"/>
</dbReference>
<dbReference type="EMBL" id="U93034">
    <property type="protein sequence ID" value="AAB65621.1"/>
    <property type="status" value="JOINED"/>
    <property type="molecule type" value="Genomic_DNA"/>
</dbReference>
<dbReference type="EMBL" id="U93035">
    <property type="protein sequence ID" value="AAB65621.1"/>
    <property type="status" value="JOINED"/>
    <property type="molecule type" value="Genomic_DNA"/>
</dbReference>
<dbReference type="EMBL" id="U93036">
    <property type="protein sequence ID" value="AAB65621.1"/>
    <property type="status" value="JOINED"/>
    <property type="molecule type" value="Genomic_DNA"/>
</dbReference>
<dbReference type="EMBL" id="M24782">
    <property type="protein sequence ID" value="AAA53190.1"/>
    <property type="molecule type" value="mRNA"/>
</dbReference>
<dbReference type="EMBL" id="U63721">
    <property type="protein sequence ID" value="AAC13884.1"/>
    <property type="molecule type" value="Genomic_DNA"/>
</dbReference>
<dbReference type="EMBL" id="U62292">
    <property type="protein sequence ID" value="AAB17544.1"/>
    <property type="molecule type" value="Genomic_DNA"/>
</dbReference>
<dbReference type="CCDS" id="CCDS43598.1">
    <molecule id="P15502-5"/>
</dbReference>
<dbReference type="CCDS" id="CCDS43599.1">
    <molecule id="P15502-7"/>
</dbReference>
<dbReference type="CCDS" id="CCDS47611.1">
    <molecule id="P15502-12"/>
</dbReference>
<dbReference type="CCDS" id="CCDS47612.1">
    <molecule id="P15502-13"/>
</dbReference>
<dbReference type="CCDS" id="CCDS5562.2">
    <molecule id="P15502-2"/>
</dbReference>
<dbReference type="CCDS" id="CCDS64673.1">
    <molecule id="P15502-1"/>
</dbReference>
<dbReference type="CCDS" id="CCDS64675.1">
    <molecule id="P15502-8"/>
</dbReference>
<dbReference type="CCDS" id="CCDS75616.1">
    <molecule id="P15502-3"/>
</dbReference>
<dbReference type="PIR" id="A32707">
    <property type="entry name" value="EAHU"/>
</dbReference>
<dbReference type="RefSeq" id="NP_000492.2">
    <molecule id="P15502-2"/>
    <property type="nucleotide sequence ID" value="NM_000501.4"/>
</dbReference>
<dbReference type="RefSeq" id="NP_001075221.1">
    <molecule id="P15502-7"/>
    <property type="nucleotide sequence ID" value="NM_001081752.3"/>
</dbReference>
<dbReference type="RefSeq" id="NP_001075222.1">
    <molecule id="P15502-12"/>
    <property type="nucleotide sequence ID" value="NM_001081753.3"/>
</dbReference>
<dbReference type="RefSeq" id="NP_001075223.1">
    <molecule id="P15502-5"/>
    <property type="nucleotide sequence ID" value="NM_001081754.3"/>
</dbReference>
<dbReference type="RefSeq" id="NP_001075224.1">
    <molecule id="P15502-13"/>
    <property type="nucleotide sequence ID" value="NM_001081755.3"/>
</dbReference>
<dbReference type="RefSeq" id="NP_001265844.1">
    <molecule id="P15502-1"/>
    <property type="nucleotide sequence ID" value="NM_001278915.2"/>
</dbReference>
<dbReference type="RefSeq" id="NP_001265845.1">
    <molecule id="P15502-8"/>
    <property type="nucleotide sequence ID" value="NM_001278916.2"/>
</dbReference>
<dbReference type="RefSeq" id="NP_001265868.1">
    <molecule id="P15502-3"/>
    <property type="nucleotide sequence ID" value="NM_001278939.2"/>
</dbReference>
<dbReference type="RefSeq" id="XP_047275927.1">
    <molecule id="P15502-6"/>
    <property type="nucleotide sequence ID" value="XM_047419971.1"/>
</dbReference>
<dbReference type="RefSeq" id="XP_054213425.1">
    <molecule id="P15502-6"/>
    <property type="nucleotide sequence ID" value="XM_054357450.1"/>
</dbReference>
<dbReference type="SASBDB" id="P15502"/>
<dbReference type="BioGRID" id="108321">
    <property type="interactions" value="22"/>
</dbReference>
<dbReference type="CORUM" id="P15502"/>
<dbReference type="FunCoup" id="P15502">
    <property type="interactions" value="193"/>
</dbReference>
<dbReference type="IntAct" id="P15502">
    <property type="interactions" value="14"/>
</dbReference>
<dbReference type="MINT" id="P15502"/>
<dbReference type="STRING" id="9606.ENSP00000351807"/>
<dbReference type="ChEMBL" id="CHEMBL3713712"/>
<dbReference type="DrugBank" id="DB00533">
    <property type="generic name" value="Rofecoxib"/>
</dbReference>
<dbReference type="Allergome" id="11040">
    <property type="allergen name" value="Hom s Elastin"/>
</dbReference>
<dbReference type="GlyCosmos" id="P15502">
    <property type="glycosylation" value="2 sites, 1 glycan"/>
</dbReference>
<dbReference type="GlyGen" id="P15502">
    <property type="glycosylation" value="2 sites, 1 O-linked glycan (2 sites)"/>
</dbReference>
<dbReference type="iPTMnet" id="P15502"/>
<dbReference type="PhosphoSitePlus" id="P15502"/>
<dbReference type="BioMuta" id="ELN"/>
<dbReference type="DMDM" id="306526276"/>
<dbReference type="jPOST" id="P15502"/>
<dbReference type="MassIVE" id="P15502"/>
<dbReference type="PaxDb" id="9606-ENSP00000351807"/>
<dbReference type="PeptideAtlas" id="P15502"/>
<dbReference type="ProteomicsDB" id="53144">
    <molecule id="P15502-3"/>
</dbReference>
<dbReference type="ProteomicsDB" id="53145">
    <molecule id="P15502-1"/>
</dbReference>
<dbReference type="ProteomicsDB" id="53146">
    <molecule id="P15502-10"/>
</dbReference>
<dbReference type="ProteomicsDB" id="53147">
    <molecule id="P15502-11"/>
</dbReference>
<dbReference type="ProteomicsDB" id="53148">
    <molecule id="P15502-12"/>
</dbReference>
<dbReference type="ProteomicsDB" id="53149">
    <molecule id="P15502-13"/>
</dbReference>
<dbReference type="ProteomicsDB" id="53150">
    <molecule id="P15502-2"/>
</dbReference>
<dbReference type="ProteomicsDB" id="53151">
    <molecule id="P15502-4"/>
</dbReference>
<dbReference type="ProteomicsDB" id="53152">
    <molecule id="P15502-5"/>
</dbReference>
<dbReference type="ProteomicsDB" id="53153">
    <molecule id="P15502-6"/>
</dbReference>
<dbReference type="ProteomicsDB" id="53154">
    <molecule id="P15502-7"/>
</dbReference>
<dbReference type="ProteomicsDB" id="53155">
    <molecule id="P15502-8"/>
</dbReference>
<dbReference type="ProteomicsDB" id="53156">
    <molecule id="P15502-9"/>
</dbReference>
<dbReference type="Antibodypedia" id="4380">
    <property type="antibodies" value="418 antibodies from 36 providers"/>
</dbReference>
<dbReference type="DNASU" id="2006"/>
<dbReference type="Ensembl" id="ENST00000252034.12">
    <molecule id="P15502-2"/>
    <property type="protein sequence ID" value="ENSP00000252034.7"/>
    <property type="gene ID" value="ENSG00000049540.19"/>
</dbReference>
<dbReference type="Ensembl" id="ENST00000320399.10">
    <molecule id="P15502-4"/>
    <property type="protein sequence ID" value="ENSP00000313565.6"/>
    <property type="gene ID" value="ENSG00000049540.19"/>
</dbReference>
<dbReference type="Ensembl" id="ENST00000357036.9">
    <molecule id="P15502-5"/>
    <property type="protein sequence ID" value="ENSP00000349540.5"/>
    <property type="gene ID" value="ENSG00000049540.19"/>
</dbReference>
<dbReference type="Ensembl" id="ENST00000380553.8">
    <molecule id="P15502-11"/>
    <property type="protein sequence ID" value="ENSP00000369926.4"/>
    <property type="gene ID" value="ENSG00000049540.19"/>
</dbReference>
<dbReference type="Ensembl" id="ENST00000380562.8">
    <molecule id="P15502-1"/>
    <property type="protein sequence ID" value="ENSP00000369936.4"/>
    <property type="gene ID" value="ENSG00000049540.19"/>
</dbReference>
<dbReference type="Ensembl" id="ENST00000380575.8">
    <molecule id="P15502-7"/>
    <property type="protein sequence ID" value="ENSP00000369949.4"/>
    <property type="gene ID" value="ENSG00000049540.19"/>
</dbReference>
<dbReference type="Ensembl" id="ENST00000380576.9">
    <molecule id="P15502-13"/>
    <property type="protein sequence ID" value="ENSP00000369950.5"/>
    <property type="gene ID" value="ENSG00000049540.19"/>
</dbReference>
<dbReference type="Ensembl" id="ENST00000380584.8">
    <molecule id="P15502-8"/>
    <property type="protein sequence ID" value="ENSP00000369958.4"/>
    <property type="gene ID" value="ENSG00000049540.19"/>
</dbReference>
<dbReference type="Ensembl" id="ENST00000429192.5">
    <molecule id="P15502-12"/>
    <property type="protein sequence ID" value="ENSP00000391129.1"/>
    <property type="gene ID" value="ENSG00000049540.19"/>
</dbReference>
<dbReference type="Ensembl" id="ENST00000692049.1">
    <molecule id="P15502-3"/>
    <property type="protein sequence ID" value="ENSP00000510104.1"/>
    <property type="gene ID" value="ENSG00000049540.19"/>
</dbReference>
<dbReference type="GeneID" id="2006"/>
<dbReference type="KEGG" id="hsa:2006"/>
<dbReference type="MANE-Select" id="ENST00000252034.12">
    <molecule id="P15502-2"/>
    <property type="protein sequence ID" value="ENSP00000252034.7"/>
    <property type="RefSeq nucleotide sequence ID" value="NM_000501.4"/>
    <property type="RefSeq protein sequence ID" value="NP_000492.2"/>
</dbReference>
<dbReference type="UCSC" id="uc003tzn.5">
    <molecule id="P15502-3"/>
    <property type="organism name" value="human"/>
</dbReference>
<dbReference type="AGR" id="HGNC:3327"/>
<dbReference type="CTD" id="2006"/>
<dbReference type="DisGeNET" id="2006"/>
<dbReference type="GeneCards" id="ELN"/>
<dbReference type="GeneReviews" id="ELN"/>
<dbReference type="HGNC" id="HGNC:3327">
    <property type="gene designation" value="ELN"/>
</dbReference>
<dbReference type="HPA" id="ENSG00000049540">
    <property type="expression patterns" value="Low tissue specificity"/>
</dbReference>
<dbReference type="MalaCards" id="ELN"/>
<dbReference type="MIM" id="123700">
    <property type="type" value="phenotype"/>
</dbReference>
<dbReference type="MIM" id="130160">
    <property type="type" value="gene"/>
</dbReference>
<dbReference type="MIM" id="185500">
    <property type="type" value="phenotype"/>
</dbReference>
<dbReference type="neXtProt" id="NX_P15502"/>
<dbReference type="OpenTargets" id="ENSG00000049540"/>
<dbReference type="Orphanet" id="90348">
    <property type="disease" value="Autosomal dominant cutis laxa"/>
</dbReference>
<dbReference type="Orphanet" id="91387">
    <property type="disease" value="Familial thoracic aortic aneurysm and aortic dissection"/>
</dbReference>
<dbReference type="Orphanet" id="3193">
    <property type="disease" value="Supravalvular aortic stenosis"/>
</dbReference>
<dbReference type="Orphanet" id="904">
    <property type="disease" value="Williams syndrome"/>
</dbReference>
<dbReference type="PharmGKB" id="PA27757"/>
<dbReference type="VEuPathDB" id="HostDB:ENSG00000049540"/>
<dbReference type="eggNOG" id="ENOG502RYNR">
    <property type="taxonomic scope" value="Eukaryota"/>
</dbReference>
<dbReference type="GeneTree" id="ENSGT00730000111510"/>
<dbReference type="HOGENOM" id="CLU_021236_0_0_1"/>
<dbReference type="InParanoid" id="P15502"/>
<dbReference type="OMA" id="CILHPSQ"/>
<dbReference type="PAN-GO" id="P15502">
    <property type="GO annotations" value="0 GO annotations based on evolutionary models"/>
</dbReference>
<dbReference type="TreeFam" id="TF338594"/>
<dbReference type="PathwayCommons" id="P15502"/>
<dbReference type="Reactome" id="R-HSA-1474228">
    <property type="pathway name" value="Degradation of the extracellular matrix"/>
</dbReference>
<dbReference type="Reactome" id="R-HSA-1566948">
    <property type="pathway name" value="Elastic fibre formation"/>
</dbReference>
<dbReference type="Reactome" id="R-HSA-2129379">
    <property type="pathway name" value="Molecules associated with elastic fibres"/>
</dbReference>
<dbReference type="SignaLink" id="P15502"/>
<dbReference type="SIGNOR" id="P15502"/>
<dbReference type="BioGRID-ORCS" id="2006">
    <property type="hits" value="23 hits in 1143 CRISPR screens"/>
</dbReference>
<dbReference type="CD-CODE" id="47E1BA53">
    <property type="entry name" value="Synthetic Condensate 000249"/>
</dbReference>
<dbReference type="CD-CODE" id="694DAD9E">
    <property type="entry name" value="Synthetic Condensate 000259"/>
</dbReference>
<dbReference type="CD-CODE" id="A42DF0C6">
    <property type="entry name" value="Synthetic Condensate 000285"/>
</dbReference>
<dbReference type="CD-CODE" id="BB244C6C">
    <property type="entry name" value="Elastin granule"/>
</dbReference>
<dbReference type="ChiTaRS" id="ELN">
    <property type="organism name" value="human"/>
</dbReference>
<dbReference type="GeneWiki" id="Elastin"/>
<dbReference type="GenomeRNAi" id="2006"/>
<dbReference type="Pharos" id="P15502">
    <property type="development level" value="Tbio"/>
</dbReference>
<dbReference type="PRO" id="PR:P15502"/>
<dbReference type="Proteomes" id="UP000005640">
    <property type="component" value="Chromosome 7"/>
</dbReference>
<dbReference type="RNAct" id="P15502">
    <property type="molecule type" value="protein"/>
</dbReference>
<dbReference type="Bgee" id="ENSG00000049540">
    <property type="expression patterns" value="Expressed in descending thoracic aorta and 147 other cell types or tissues"/>
</dbReference>
<dbReference type="ExpressionAtlas" id="P15502">
    <property type="expression patterns" value="baseline and differential"/>
</dbReference>
<dbReference type="GO" id="GO:0062023">
    <property type="term" value="C:collagen-containing extracellular matrix"/>
    <property type="evidence" value="ECO:0007005"/>
    <property type="project" value="BHF-UCL"/>
</dbReference>
<dbReference type="GO" id="GO:0071953">
    <property type="term" value="C:elastic fiber"/>
    <property type="evidence" value="ECO:0000314"/>
    <property type="project" value="UniProtKB"/>
</dbReference>
<dbReference type="GO" id="GO:0031012">
    <property type="term" value="C:extracellular matrix"/>
    <property type="evidence" value="ECO:0000304"/>
    <property type="project" value="ProtInc"/>
</dbReference>
<dbReference type="GO" id="GO:0005576">
    <property type="term" value="C:extracellular region"/>
    <property type="evidence" value="ECO:0000304"/>
    <property type="project" value="Reactome"/>
</dbReference>
<dbReference type="GO" id="GO:0050840">
    <property type="term" value="F:extracellular matrix binding"/>
    <property type="evidence" value="ECO:0007669"/>
    <property type="project" value="Ensembl"/>
</dbReference>
<dbReference type="GO" id="GO:0030023">
    <property type="term" value="F:extracellular matrix constituent conferring elasticity"/>
    <property type="evidence" value="ECO:0007669"/>
    <property type="project" value="Ensembl"/>
</dbReference>
<dbReference type="GO" id="GO:0005201">
    <property type="term" value="F:extracellular matrix structural constituent"/>
    <property type="evidence" value="ECO:0000250"/>
    <property type="project" value="BHF-UCL"/>
</dbReference>
<dbReference type="GO" id="GO:0009887">
    <property type="term" value="P:animal organ morphogenesis"/>
    <property type="evidence" value="ECO:0000304"/>
    <property type="project" value="ProtInc"/>
</dbReference>
<dbReference type="GO" id="GO:0003180">
    <property type="term" value="P:aortic valve morphogenesis"/>
    <property type="evidence" value="ECO:0000250"/>
    <property type="project" value="BHF-UCL"/>
</dbReference>
<dbReference type="GO" id="GO:0008015">
    <property type="term" value="P:blood circulation"/>
    <property type="evidence" value="ECO:0000304"/>
    <property type="project" value="ProtInc"/>
</dbReference>
<dbReference type="GO" id="GO:0085029">
    <property type="term" value="P:extracellular matrix assembly"/>
    <property type="evidence" value="ECO:0000250"/>
    <property type="project" value="BHF-UCL"/>
</dbReference>
<dbReference type="GO" id="GO:0003151">
    <property type="term" value="P:outflow tract morphogenesis"/>
    <property type="evidence" value="ECO:0000315"/>
    <property type="project" value="BHF-UCL"/>
</dbReference>
<dbReference type="GO" id="GO:0030833">
    <property type="term" value="P:regulation of actin filament polymerization"/>
    <property type="evidence" value="ECO:0007669"/>
    <property type="project" value="Ensembl"/>
</dbReference>
<dbReference type="GO" id="GO:0048660">
    <property type="term" value="P:regulation of smooth muscle cell proliferation"/>
    <property type="evidence" value="ECO:0000304"/>
    <property type="project" value="GO_Central"/>
</dbReference>
<dbReference type="GO" id="GO:0007585">
    <property type="term" value="P:respiratory gaseous exchange by respiratory system"/>
    <property type="evidence" value="ECO:0000304"/>
    <property type="project" value="ProtInc"/>
</dbReference>
<dbReference type="GO" id="GO:0007519">
    <property type="term" value="P:skeletal muscle tissue development"/>
    <property type="evidence" value="ECO:0007669"/>
    <property type="project" value="Ensembl"/>
</dbReference>
<dbReference type="GO" id="GO:0043149">
    <property type="term" value="P:stress fiber assembly"/>
    <property type="evidence" value="ECO:0007669"/>
    <property type="project" value="Ensembl"/>
</dbReference>
<dbReference type="InterPro" id="IPR003979">
    <property type="entry name" value="Tropoelastin"/>
</dbReference>
<dbReference type="PANTHER" id="PTHR24018">
    <property type="entry name" value="ELASTIN"/>
    <property type="match status" value="1"/>
</dbReference>
<dbReference type="PANTHER" id="PTHR24018:SF5">
    <property type="entry name" value="ELASTIN"/>
    <property type="match status" value="1"/>
</dbReference>
<dbReference type="PRINTS" id="PR01500">
    <property type="entry name" value="TROPOELASTIN"/>
</dbReference>
<evidence type="ECO:0000250" key="1"/>
<evidence type="ECO:0000250" key="2">
    <source>
        <dbReference type="UniProtKB" id="P04985"/>
    </source>
</evidence>
<evidence type="ECO:0000250" key="3">
    <source>
        <dbReference type="UniProtKB" id="P54320"/>
    </source>
</evidence>
<evidence type="ECO:0000250" key="4">
    <source>
        <dbReference type="UniProtKB" id="Q99372"/>
    </source>
</evidence>
<evidence type="ECO:0000256" key="5">
    <source>
        <dbReference type="SAM" id="MobiDB-lite"/>
    </source>
</evidence>
<evidence type="ECO:0000269" key="6">
    <source>
    </source>
</evidence>
<evidence type="ECO:0000269" key="7">
    <source>
    </source>
</evidence>
<evidence type="ECO:0000269" key="8">
    <source>
    </source>
</evidence>
<evidence type="ECO:0000269" key="9">
    <source>
    </source>
</evidence>
<evidence type="ECO:0000269" key="10">
    <source>
    </source>
</evidence>
<evidence type="ECO:0000269" key="11">
    <source>
    </source>
</evidence>
<evidence type="ECO:0000269" key="12">
    <source>
    </source>
</evidence>
<evidence type="ECO:0000269" key="13">
    <source>
    </source>
</evidence>
<evidence type="ECO:0000269" key="14">
    <source>
    </source>
</evidence>
<evidence type="ECO:0000269" key="15">
    <source>
    </source>
</evidence>
<evidence type="ECO:0000269" key="16">
    <source>
    </source>
</evidence>
<evidence type="ECO:0000269" key="17">
    <source>
    </source>
</evidence>
<evidence type="ECO:0000269" key="18">
    <source>
    </source>
</evidence>
<evidence type="ECO:0000269" key="19">
    <source>
    </source>
</evidence>
<evidence type="ECO:0000269" key="20">
    <source>
    </source>
</evidence>
<evidence type="ECO:0000269" key="21">
    <source>
    </source>
</evidence>
<evidence type="ECO:0000269" key="22">
    <source>
    </source>
</evidence>
<evidence type="ECO:0000303" key="23">
    <source>
    </source>
</evidence>
<evidence type="ECO:0000303" key="24">
    <source>
    </source>
</evidence>
<evidence type="ECO:0000303" key="25">
    <source>
    </source>
</evidence>
<evidence type="ECO:0000303" key="26">
    <source>
    </source>
</evidence>
<evidence type="ECO:0000303" key="27">
    <source>
    </source>
</evidence>
<evidence type="ECO:0000303" key="28">
    <source ref="5"/>
</evidence>
<evidence type="ECO:0000305" key="29"/>
<evidence type="ECO:0000305" key="30">
    <source>
    </source>
</evidence>
<name>ELN_HUMAN</name>
<sequence length="786" mass="68398">MAGLTAAAPRPGVLLLLLSILHPSRPGGVPGAIPGGVPGGVFYPGAGLGALGGGALGPGGKPLKPVPGGLAGAGLGAGLGAFPAVTFPGALVPGGVADAAAAYKAAKAGAGLGGVPGVGGLGVSAGAVVPQPGAGVKPGKVPGVGLPGVYPGGVLPGARFPGVGVLPGVPTGAGVKPKAPGVGGAFAGIPGVGPFGGPQPGVPLGYPIKAPKLPGGYGLPYTTGKLPYGYGPGGVAGAAGKAGYPTGTGVGPQAAAAAAAKAAAKFGAGAAGVLPGVGGAGVPGVPGAIPGIGGIAGVGTPAAAAAAAAAAKAAKYGAAAGLVPGGPGFGPGVVGVPGAGVPGVGVPGAGIPVVPGAGIPGAAVPGVVSPEAAAKAAAKAAKYGARPGVGVGGIPTYGVGAGGFPGFGVGVGGIPGVAGVPGVGGVPGVGGVPGVGISPEAQAAAAAKAAKYGAAGAGVLGGLVPGAPGAVPGVPGTGGVPGVGTPAAAAAKAAAKAAQFGLVPGVGVAPGVGVAPGVGVAPGVGLAPGVGVAPGVGVAPGVGVAPGIGPGGVAAAAKSAAKVAAKAQLRAAAGLGAGIPGLGVGVGVPGLGVGAGVPGLGVGAGVPGFGAGADEGVRRSLSPELREGDPSSSQHLPSTPSSPRVPGALAAAKAAKYGAAVPGVLGGLGALGGVGIPGGVVGAGPAAAAAAAKAAAKAAQFGLVGAAGLGGLGVGGLGVPGVGGLGGIPPAAAAKAAKYGAAGLGGVLGGAGQFPLGGVAARPGFGLSPIFPGGACLGKACGRKRK</sequence>
<feature type="signal peptide" evidence="4">
    <location>
        <begin position="1"/>
        <end position="26"/>
    </location>
</feature>
<feature type="chain" id="PRO_0000021163" description="Elastin">
    <location>
        <begin position="27"/>
        <end position="786"/>
    </location>
</feature>
<feature type="region of interest" description="Disordered" evidence="5">
    <location>
        <begin position="615"/>
        <end position="645"/>
    </location>
</feature>
<feature type="compositionally biased region" description="Low complexity" evidence="5">
    <location>
        <begin position="630"/>
        <end position="645"/>
    </location>
</feature>
<feature type="modified residue" description="Hydroxyproline" evidence="11">
    <location>
        <position position="34"/>
    </location>
</feature>
<feature type="modified residue" description="Hydroxyproline; partial" evidence="10">
    <location>
        <position position="65"/>
    </location>
</feature>
<feature type="modified residue" description="Hydroxyproline; partial" evidence="10">
    <location>
        <position position="67"/>
    </location>
</feature>
<feature type="modified residue" description="Hydroxyproline; partial" evidence="10">
    <location>
        <position position="88"/>
    </location>
</feature>
<feature type="modified residue" description="Allysine" evidence="2">
    <location>
        <position position="104"/>
    </location>
</feature>
<feature type="modified residue" description="Allysine" evidence="2">
    <location>
        <position position="107"/>
    </location>
</feature>
<feature type="modified residue" description="4-hydroxyproline; partial" evidence="10">
    <location>
        <position position="116"/>
    </location>
</feature>
<feature type="modified residue" description="Hydroxyproline; partial" evidence="10">
    <location>
        <position position="156"/>
    </location>
</feature>
<feature type="modified residue" description="Hydroxyproline; partial" evidence="11">
    <location>
        <position position="167"/>
    </location>
</feature>
<feature type="modified residue" description="Hydroxyproline; partial" evidence="11">
    <location>
        <position position="170"/>
    </location>
</feature>
<feature type="modified residue" description="Hydroxyproline; partial" evidence="10">
    <location>
        <position position="177"/>
    </location>
</feature>
<feature type="modified residue" description="4-hydroxyproline; partial" evidence="10 11">
    <location>
        <position position="190"/>
    </location>
</feature>
<feature type="modified residue" description="Allysine" evidence="2">
    <location>
        <position position="241"/>
    </location>
</feature>
<feature type="modified residue" description="Allysine" evidence="2">
    <location>
        <position position="261"/>
    </location>
</feature>
<feature type="modified residue" description="Allysine" evidence="2">
    <location>
        <position position="265"/>
    </location>
</feature>
<feature type="modified residue" description="4-hydroxyproline; partial" evidence="11">
    <location>
        <position position="283"/>
    </location>
</feature>
<feature type="modified residue" description="4-hydroxyproline; partial" evidence="10 11">
    <location>
        <position position="286"/>
    </location>
</feature>
<feature type="modified residue" description="Hydroxyproline; partial" evidence="10">
    <location>
        <position position="290"/>
    </location>
</feature>
<feature type="modified residue" description="Allysine" evidence="2">
    <location>
        <position position="312"/>
    </location>
</feature>
<feature type="modified residue" description="Allysine" evidence="2">
    <location>
        <position position="315"/>
    </location>
</feature>
<feature type="modified residue" description="4-hydroxyproline; partial" evidence="11">
    <location>
        <position position="327"/>
    </location>
</feature>
<feature type="modified residue" description="4-hydroxyproline; partial" evidence="11">
    <location>
        <position position="342"/>
    </location>
</feature>
<feature type="modified residue" description="4-hydroxyproline; partial" evidence="11">
    <location>
        <position position="347"/>
    </location>
</feature>
<feature type="modified residue" description="Hydroxyproline; partial" evidence="11">
    <location>
        <position position="352"/>
    </location>
</feature>
<feature type="modified residue" description="Hydroxyproline; partial" evidence="11">
    <location>
        <position position="355"/>
    </location>
</feature>
<feature type="modified residue" description="4-hydroxyproline; partial" evidence="11">
    <location>
        <position position="360"/>
    </location>
</feature>
<feature type="modified residue" description="Allysine" evidence="2">
    <location>
        <position position="375"/>
    </location>
</feature>
<feature type="modified residue" description="Allysine" evidence="2">
    <location>
        <position position="379"/>
    </location>
</feature>
<feature type="modified residue" description="Allysine" evidence="2">
    <location>
        <position position="382"/>
    </location>
</feature>
<feature type="modified residue" description="4-hydroxyproline; partial" evidence="10">
    <location>
        <position position="415"/>
    </location>
</feature>
<feature type="modified residue" description="Hydroxyproline; partial" evidence="11">
    <location>
        <position position="421"/>
    </location>
</feature>
<feature type="modified residue" description="4-hydroxyproline; partial" evidence="10 11">
    <location>
        <position position="427"/>
    </location>
</feature>
<feature type="modified residue" description="Allysine" evidence="2">
    <location>
        <position position="448"/>
    </location>
</feature>
<feature type="modified residue" description="Allysine" evidence="2">
    <location>
        <position position="451"/>
    </location>
</feature>
<feature type="modified residue" description="Hydroxyproline; partial" evidence="10">
    <location>
        <position position="465"/>
    </location>
</feature>
<feature type="modified residue" description="4-hydroxyproline; partial" evidence="10">
    <location>
        <position position="481"/>
    </location>
</feature>
<feature type="modified residue" description="Allysine" evidence="2">
    <location>
        <position position="492"/>
    </location>
</feature>
<feature type="modified residue" description="Allysine" evidence="2">
    <location>
        <position position="496"/>
    </location>
</feature>
<feature type="modified residue" description="Hydroxyproline; partial" evidence="10">
    <location>
        <position position="522"/>
    </location>
</feature>
<feature type="modified residue" description="Hydroxyproline; partial" evidence="11">
    <location>
        <position position="550"/>
    </location>
</feature>
<feature type="modified residue" description="Allysine" evidence="2">
    <location>
        <position position="558"/>
    </location>
</feature>
<feature type="modified residue" description="Allysine" evidence="2">
    <location>
        <position position="562"/>
    </location>
</feature>
<feature type="modified residue" description="Allysine" evidence="2">
    <location>
        <position position="566"/>
    </location>
</feature>
<feature type="modified residue" description="4-hydroxyproline; partial" evidence="10 11">
    <location>
        <position position="580"/>
    </location>
</feature>
<feature type="modified residue" description="4-hydroxyproline" evidence="30">
    <location>
        <position position="589"/>
    </location>
</feature>
<feature type="modified residue" description="4-hydroxyproline" evidence="30">
    <location>
        <position position="598"/>
    </location>
</feature>
<feature type="modified residue" description="4-hydroxyproline; partial" evidence="10">
    <location>
        <position position="607"/>
    </location>
</feature>
<feature type="modified residue" description="Hydroxyproline; partial" evidence="10">
    <location>
        <position position="646"/>
    </location>
</feature>
<feature type="modified residue" description="Allysine" evidence="2">
    <location>
        <position position="653"/>
    </location>
</feature>
<feature type="modified residue" description="Allysine" evidence="2">
    <location>
        <position position="656"/>
    </location>
</feature>
<feature type="modified residue" description="4-hydroxyproline; partial" evidence="10 11">
    <location>
        <position position="677"/>
    </location>
</feature>
<feature type="modified residue" description="Allysine" evidence="2">
    <location>
        <position position="693"/>
    </location>
</feature>
<feature type="modified residue" description="Allysine" evidence="2">
    <location>
        <position position="697"/>
    </location>
</feature>
<feature type="modified residue" description="Allysine" evidence="2">
    <location>
        <position position="735"/>
    </location>
</feature>
<feature type="modified residue" description="Allysine" evidence="2">
    <location>
        <position position="738"/>
    </location>
</feature>
<feature type="modified residue" description="Hydroxyproline; partial" evidence="10">
    <location>
        <position position="769"/>
    </location>
</feature>
<feature type="modified residue" description="Hydroxyproline; partial" evidence="10">
    <location>
        <position position="772"/>
    </location>
</feature>
<feature type="disulfide bond" evidence="1">
    <location>
        <begin position="776"/>
        <end position="781"/>
    </location>
</feature>
<feature type="splice variant" id="VSP_012479" description="In isoform 7." evidence="25">
    <location>
        <begin position="45"/>
        <end position="54"/>
    </location>
</feature>
<feature type="splice variant" id="VSP_012480" description="In isoform 11." evidence="23">
    <location>
        <begin position="78"/>
        <end position="180"/>
    </location>
</feature>
<feature type="splice variant" id="VSP_012481" description="In isoform 5 and isoform 12." evidence="23 25">
    <original>A</original>
    <variation>AAPSVP</variation>
    <location>
        <position position="125"/>
    </location>
</feature>
<feature type="splice variant" id="VSP_012482" description="In isoform 8 and isoform 11." evidence="23 24">
    <location>
        <begin position="215"/>
        <end position="228"/>
    </location>
</feature>
<feature type="splice variant" id="VSP_012483" description="In isoform 6, isoform 7, isoform 8, isoform 11, isoform 12 and isoform 13." evidence="23 24 25 28">
    <location>
        <begin position="453"/>
        <end position="500"/>
    </location>
</feature>
<feature type="splice variant" id="VSP_012484" description="In isoform 1, isoform 2, isoform 4 and isoform 5." evidence="25 26 27">
    <location>
        <begin position="453"/>
        <end position="481"/>
    </location>
</feature>
<feature type="splice variant" id="VSP_012485" description="In isoform 1, isoform 9 and isoform 10." evidence="27">
    <original>F</original>
    <variation>FALLNLA</variation>
    <location>
        <position position="500"/>
    </location>
</feature>
<feature type="splice variant" id="VSP_012486" description="In isoform 8." evidence="24">
    <original>AAAKSAAKVAAKAQLR</original>
    <variation>G</variation>
    <location>
        <begin position="555"/>
        <end position="570"/>
    </location>
</feature>
<feature type="splice variant" id="VSP_012487" description="In isoform 1, isoform 2, isoform 5, isoform 6, isoform 7, isoform 8, isoform 10, isoform 11, isoform 12 and isoform 13." evidence="23 24 25 26 27 28">
    <location>
        <begin position="612"/>
        <end position="644"/>
    </location>
</feature>
<feature type="splice variant" id="VSP_012488" description="In isoform 5, isoform 6, isoform 7, isoform 8, isoform 11 and isoform 12." evidence="23 24 25">
    <location>
        <begin position="740"/>
        <end position="757"/>
    </location>
</feature>
<feature type="sequence variant" id="VAR_072395" description="Found in a patient with autosomal recessive cutis laxa also carrying a mutation in FBLN5; uncertain significance; dbSNP:rs1064793880." evidence="15">
    <original>P</original>
    <variation>S</variation>
    <location>
        <position position="211"/>
    </location>
</feature>
<feature type="sequence variant" id="VAR_020882" description="In dbSNP:rs2071307." evidence="7 8 16 17 18 19 21">
    <original>G</original>
    <variation>S</variation>
    <location>
        <position position="422"/>
    </location>
</feature>
<feature type="sequence variant" id="VAR_056869" description="In dbSNP:rs17855988." evidence="8 21">
    <original>G</original>
    <variation>R</variation>
    <location>
        <position position="610"/>
    </location>
</feature>
<feature type="sequence conflict" description="In Ref. 4; CAD97910." evidence="29" ref="4">
    <original>G</original>
    <variation>E</variation>
    <location>
        <position position="317"/>
    </location>
</feature>
<feature type="sequence conflict" description="In Ref. 3; BAC85506." evidence="29" ref="3">
    <original>V</original>
    <variation>I</variation>
    <location>
        <position position="553"/>
    </location>
</feature>
<feature type="sequence conflict" description="In Ref. 4; CAD98065." evidence="29" ref="4">
    <original>A</original>
    <variation>T</variation>
    <location>
        <position position="691"/>
    </location>
</feature>
<feature type="sequence conflict" description="In Ref. 4; CAD97910." evidence="29" ref="4">
    <original>G</original>
    <variation>D</variation>
    <location>
        <position position="773"/>
    </location>
</feature>
<proteinExistence type="evidence at protein level"/>
<comment type="function">
    <text evidence="3">Major structural protein of tissues such as aorta and nuchal ligament, which must expand rapidly and recover completely. Molecular determinant of the late arterial morphogenesis, stabilizing arterial structure by regulating proliferation and organization of vascular smooth muscle (By similarity).</text>
</comment>
<comment type="subunit">
    <text evidence="2 9 12 13 14">The polymeric elastin chains are cross-linked together into an extensible 3D network. Forms a ternary complex with BGN and MFAP2. Interacts with MFAP2 via divalent cations (calcium &gt; magnesium &gt; manganese) in a dose-dependent and saturating manner. Interacts with FBLN5 (PubMed:15790312, PubMed:17035250). Interacts with FBN1 (PubMed:15790312). Forms a ternary complex with FBN1 and FBLN2 or FBLN5 (PubMed:17255108). Interacts with MFAP4 in a Ca (2+)-dependent manner; this interaction promotes ELN self-assembly (By similarity) (PubMed:15790312, PubMed:17035250, PubMed:17255108). Interacts with EFEMP2 with moderate affinity (PubMed:16478991).</text>
</comment>
<comment type="interaction">
    <interactant intactId="EBI-1222108">
        <id>P15502</id>
    </interactant>
    <interactant intactId="EBI-743414">
        <id>O95967</id>
        <label>EFEMP2</label>
    </interactant>
    <organismsDiffer>false</organismsDiffer>
    <experiments>5</experiments>
</comment>
<comment type="interaction">
    <interactant intactId="EBI-1222108">
        <id>P15502</id>
    </interactant>
    <interactant intactId="EBI-947897">
        <id>Q9UBX5</id>
        <label>FBLN5</label>
    </interactant>
    <organismsDiffer>false</organismsDiffer>
    <experiments>3</experiments>
</comment>
<comment type="interaction">
    <interactant intactId="EBI-1222108">
        <id>P15502</id>
    </interactant>
    <interactant intactId="EBI-3893481">
        <id>P28300</id>
        <label>LOX</label>
    </interactant>
    <organismsDiffer>false</organismsDiffer>
    <experiments>2</experiments>
</comment>
<comment type="interaction">
    <interactant intactId="EBI-7882008">
        <id>P15502-2</id>
    </interactant>
    <interactant intactId="EBI-7172227">
        <id>Q9Y4K0</id>
        <label>LOXL2</label>
    </interactant>
    <organismsDiffer>false</organismsDiffer>
    <experiments>2</experiments>
</comment>
<comment type="subcellular location">
    <subcellularLocation>
        <location evidence="13">Secreted</location>
        <location evidence="13">Extracellular space</location>
        <location evidence="13">Extracellular matrix</location>
    </subcellularLocation>
    <text evidence="13">Extracellular matrix of elastic fibers.</text>
</comment>
<comment type="alternative products">
    <event type="alternative splicing"/>
    <isoform>
        <id>P15502-3</id>
        <name>3</name>
        <sequence type="displayed"/>
    </isoform>
    <isoform>
        <id>P15502-1</id>
        <name>1</name>
        <sequence type="described" ref="VSP_012484 VSP_012485 VSP_012487"/>
    </isoform>
    <isoform>
        <id>P15502-2</id>
        <name>2</name>
        <sequence type="described" ref="VSP_012484 VSP_012487"/>
    </isoform>
    <isoform>
        <id>P15502-4</id>
        <name>4</name>
        <sequence type="described" ref="VSP_012484"/>
    </isoform>
    <isoform>
        <id>P15502-5</id>
        <name>5</name>
        <sequence type="described" ref="VSP_012481 VSP_012484 VSP_012487 VSP_012488"/>
    </isoform>
    <isoform>
        <id>P15502-6</id>
        <name>6</name>
        <sequence type="described" ref="VSP_012483 VSP_012487 VSP_012488"/>
    </isoform>
    <isoform>
        <id>P15502-7</id>
        <name>7</name>
        <sequence type="described" ref="VSP_012479 VSP_012483 VSP_012487 VSP_012488"/>
    </isoform>
    <isoform>
        <id>P15502-8</id>
        <name>8</name>
        <sequence type="described" ref="VSP_012482 VSP_012483 VSP_012486 VSP_012487 VSP_012488"/>
    </isoform>
    <isoform>
        <id>P15502-9</id>
        <name>9</name>
        <sequence type="described" ref="VSP_012485"/>
    </isoform>
    <isoform>
        <id>P15502-10</id>
        <name>10</name>
        <sequence type="described" ref="VSP_012485 VSP_012487"/>
    </isoform>
    <isoform>
        <id>P15502-11</id>
        <name>11</name>
        <sequence type="described" ref="VSP_012480 VSP_012482 VSP_012483 VSP_012487 VSP_012488"/>
    </isoform>
    <isoform>
        <id>P15502-12</id>
        <name>12</name>
        <sequence type="described" ref="VSP_012481 VSP_012483 VSP_012487 VSP_012488"/>
    </isoform>
    <isoform>
        <id>P15502-13</id>
        <name>13</name>
        <sequence type="described" ref="VSP_012483 VSP_012487"/>
    </isoform>
    <text>Additional isoforms seem to exist.</text>
</comment>
<comment type="tissue specificity">
    <text evidence="20">Expressed within the outer myometrial smooth muscle and throughout the arteriolar tree of uterus (at protein level). Also expressed in the large arteries, lung and skin.</text>
</comment>
<comment type="PTM">
    <text>Elastin is formed through the cross-linking of its soluble precursor tropoelastin. Cross-linking is initiated through the action of lysyl oxidase on exposed lysines to form allysine. Subsequent spontaneous condensation reactions with other allysine or unmodified lysine residues result in various bi-, tri-, and tetrafunctional cross-links. The most abundant cross-links in mature elastin fibers are lysinonorleucine, allysine aldol, desmosine, and isodesmosine.</text>
</comment>
<comment type="PTM">
    <text evidence="1">Hydroxylation on proline residues within the sequence motif, GXPG, is most likely 4-hydroxy as this fits the requirement for 4-hydroxylation in vertebrates.</text>
</comment>
<comment type="disease" evidence="22">
    <disease id="DI-01204">
        <name>Cutis laxa, autosomal dominant, 1</name>
        <acronym>ADCL1</acronym>
        <description>A connective tissue disorder characterized by loose, hyperextensible skin with decreased resilience and elasticity leading to a premature aged appearance. Face, hands, feet, joints, and torso may be differentially affected. Additional variable clinical features are gastrointestinal diverticula, hernia, and genital prolapse. Rare manifestations are pulmonary artery stenosis, aortic aneurysm, bronchiectasis, and emphysema.</description>
        <dbReference type="MIM" id="123700"/>
    </disease>
    <text>The disease is caused by variants affecting the gene represented in this entry.</text>
</comment>
<comment type="disease" evidence="6">
    <disease id="DI-02347">
        <name>Supravalvular aortic stenosis</name>
        <acronym>SVAS</acronym>
        <description>Congenital narrowing of the ascending aorta which can occur sporadically, as an autosomal dominant condition, or as one component of Williams-Beuren syndrome.</description>
        <dbReference type="MIM" id="185500"/>
    </disease>
    <text>The disease is caused by variants affecting the gene represented in this entry.</text>
</comment>
<comment type="disease">
    <text evidence="20">ELN is located in the Williams-Beuren syndrome (WBS) critical region. WBS results from a hemizygous deletion of several genes on chromosome 7q11.23, thought to arise as a consequence of unequal crossing over between highly homologous low-copy repeat sequences flanking the deleted region. Haploinsufficiency of ELN may be the cause of certain cardiovascular and musculo-skeletal abnormalities observed in the disease (PubMed:8812460).</text>
</comment>
<comment type="similarity">
    <text evidence="29">Belongs to the elastin family.</text>
</comment>
<comment type="sequence caution" evidence="29">
    <conflict type="erroneous initiation">
        <sequence resource="EMBL-CDS" id="CAD98065"/>
    </conflict>
    <text>Extended N-terminus.</text>
</comment>
<comment type="online information" name="Wikipedia">
    <link uri="https://en.wikipedia.org/wiki/Elastin"/>
    <text>Elastin entry</text>
</comment>
<organism>
    <name type="scientific">Homo sapiens</name>
    <name type="common">Human</name>
    <dbReference type="NCBI Taxonomy" id="9606"/>
    <lineage>
        <taxon>Eukaryota</taxon>
        <taxon>Metazoa</taxon>
        <taxon>Chordata</taxon>
        <taxon>Craniata</taxon>
        <taxon>Vertebrata</taxon>
        <taxon>Euteleostomi</taxon>
        <taxon>Mammalia</taxon>
        <taxon>Eutheria</taxon>
        <taxon>Euarchontoglires</taxon>
        <taxon>Primates</taxon>
        <taxon>Haplorrhini</taxon>
        <taxon>Catarrhini</taxon>
        <taxon>Hominidae</taxon>
        <taxon>Homo</taxon>
    </lineage>
</organism>